<name>SC16B_ARATH</name>
<feature type="chain" id="PRO_0000430537" description="Protein transport protein SEC16B homolog">
    <location>
        <begin position="1"/>
        <end position="1361"/>
    </location>
</feature>
<feature type="region of interest" description="Disordered" evidence="2">
    <location>
        <begin position="82"/>
        <end position="109"/>
    </location>
</feature>
<feature type="region of interest" description="Disordered" evidence="2">
    <location>
        <begin position="487"/>
        <end position="513"/>
    </location>
</feature>
<feature type="region of interest" description="Disordered" evidence="2">
    <location>
        <begin position="984"/>
        <end position="1013"/>
    </location>
</feature>
<feature type="region of interest" description="Disordered" evidence="2">
    <location>
        <begin position="1025"/>
        <end position="1062"/>
    </location>
</feature>
<feature type="region of interest" description="Disordered" evidence="2">
    <location>
        <begin position="1163"/>
        <end position="1204"/>
    </location>
</feature>
<feature type="region of interest" description="Disordered" evidence="2">
    <location>
        <begin position="1216"/>
        <end position="1235"/>
    </location>
</feature>
<feature type="region of interest" description="Disordered" evidence="2">
    <location>
        <begin position="1306"/>
        <end position="1361"/>
    </location>
</feature>
<feature type="compositionally biased region" description="Low complexity" evidence="2">
    <location>
        <begin position="491"/>
        <end position="503"/>
    </location>
</feature>
<feature type="compositionally biased region" description="Polar residues" evidence="2">
    <location>
        <begin position="996"/>
        <end position="1013"/>
    </location>
</feature>
<feature type="compositionally biased region" description="Polar residues" evidence="2">
    <location>
        <begin position="1169"/>
        <end position="1200"/>
    </location>
</feature>
<feature type="compositionally biased region" description="Polar residues" evidence="2">
    <location>
        <begin position="1222"/>
        <end position="1234"/>
    </location>
</feature>
<feature type="compositionally biased region" description="Polar residues" evidence="2">
    <location>
        <begin position="1308"/>
        <end position="1325"/>
    </location>
</feature>
<feature type="compositionally biased region" description="Low complexity" evidence="2">
    <location>
        <begin position="1326"/>
        <end position="1354"/>
    </location>
</feature>
<feature type="modified residue" description="Phosphoserine" evidence="8">
    <location>
        <position position="46"/>
    </location>
</feature>
<accession>Q9FGK8</accession>
<organism evidence="7">
    <name type="scientific">Arabidopsis thaliana</name>
    <name type="common">Mouse-ear cress</name>
    <dbReference type="NCBI Taxonomy" id="3702"/>
    <lineage>
        <taxon>Eukaryota</taxon>
        <taxon>Viridiplantae</taxon>
        <taxon>Streptophyta</taxon>
        <taxon>Embryophyta</taxon>
        <taxon>Tracheophyta</taxon>
        <taxon>Spermatophyta</taxon>
        <taxon>Magnoliopsida</taxon>
        <taxon>eudicotyledons</taxon>
        <taxon>Gunneridae</taxon>
        <taxon>Pentapetalae</taxon>
        <taxon>rosids</taxon>
        <taxon>malvids</taxon>
        <taxon>Brassicales</taxon>
        <taxon>Brassicaceae</taxon>
        <taxon>Camelineae</taxon>
        <taxon>Arabidopsis</taxon>
    </lineage>
</organism>
<proteinExistence type="evidence at protein level"/>
<evidence type="ECO:0000250" key="1">
    <source>
        <dbReference type="UniProtKB" id="Q9FGK9"/>
    </source>
</evidence>
<evidence type="ECO:0000256" key="2">
    <source>
        <dbReference type="SAM" id="MobiDB-lite"/>
    </source>
</evidence>
<evidence type="ECO:0000269" key="3">
    <source>
    </source>
</evidence>
<evidence type="ECO:0000303" key="4">
    <source>
    </source>
</evidence>
<evidence type="ECO:0000305" key="5"/>
<evidence type="ECO:0000312" key="6">
    <source>
        <dbReference type="Araport" id="AT5G47490"/>
    </source>
</evidence>
<evidence type="ECO:0000312" key="7">
    <source>
        <dbReference type="EMBL" id="BAB09075.1"/>
    </source>
</evidence>
<evidence type="ECO:0007744" key="8">
    <source>
    </source>
</evidence>
<gene>
    <name evidence="4" type="primary">SEC16B</name>
    <name evidence="6" type="ordered locus">At5g47490</name>
    <name evidence="7" type="ORF">MNJ7.8</name>
</gene>
<sequence length="1361" mass="147817">MASASQFLLEDQTDEDFFDKLVDDAYSPTEAQASSSVTELKFDDESDSDDIRAFSNLSIGKDPLGGGDGTLNEAILGNDVANEGASGSVGEDEPSSIAPEAVQFPHSDARELRDDEMRSEVADMPLSETAKECTIVNEPGIPGVKELDWGSFDADLSVNDGRGFGSYSDFFTELDATAGNLQGKADVAVATGGNLVANDTNNTSVGFEQHQGQLHHDSASGQYVDNSQSWENLYPGWKYDASTGQWFQVDGHDASMNSQESYENSTSNWENVAANNSDVAYQRQSTASAVAGTVENVSTWNQVSQVSNGYPEHMVFDSQYPGWYYDTIAQEWRSLDSYNQAFQTTGQANDQQVQNGNSFTAVDHSRESNVHDVYDKNQILRTQKFDIQSQHGSWDQSYYDKNQQATNMWQPENAGAAEAAVTPASLSNSGGNQQVNNLYSTGPVAEQFKPYESGVQSFIPQHMNVANVTQNGPMSFSNGFYSRQESVDDAPQSFQSSQLFSPSAGRSSDGRPPHALVNFGFGGKLILMKDDSGSLQNSSFGSQKGTGGSSISVLNLAEVISGSASYSSLGENSLSYFSCLDQQSLPGPLVGGNVGSKDLHKWLDERILNCESSYMDFSRGKLLKMLLSLLRISCQYYGKLRSPFGSDALQKETDSAEAAVAKLFAIAKEDGVQNGYAPISQCLQHLPPESQMQVTASEVQNLLASGRKMEALQCAQEGHLWGPALVIAAQLGQQFYVDTVKQMALRQLVPGSPLRTLCLLVAGQPAEVFSTGSTSDISFPGSVNLPPQQPQFGCSSMLDSWEENLGIITANRTTDDELVITHLGDCMWKERGEIIAAHICYLIADKNFDTYSDTARLCLVGADHWKYPRTYASPEAIQRTELYEYSKTLGNSQYTLLTFQPYKVMYAHMLAEVGKLSTAQKYCQAVLKCLKTGRSPEVEMWKQFVSSLEERIRIHQQGGYTANLHPEKLVGVLLNFFGSKTHRPVGGMPPPAPHSTKGNLQGNEYQHQQQEATKLAYSQSVNTMSSLMPPASVEPTHESGGSGRRMAVHTRSVSEPDFGRTPIQEMADSSKEKAVDGVTKLKSSGSVAGSRFSRFGFGIFKDTVGRVLARSSKEAKLGAENQFYYDDKLKRWVERGVEPPAEEAALPPPPTIGAFQNNSLGYENKSDMIPSNGNWSSGGPTPSENSSGIPPISHGSNQFSARGRTGVRARYVDTYNPPGRGNSHTMIPSPSVQTAKPPIPAKAKFFVPAAPASFSNDQAMEPAAAETRQEEISADEVVASSGAPPPMMMQRYPSMDNIQRNGLGISVNGDNHQPPTSRRTASWSGNFNTSFTPPTSPSTFKPVLLNSSSSSLGEELQEVEL</sequence>
<protein>
    <recommendedName>
        <fullName evidence="5">Protein transport protein SEC16B homolog</fullName>
    </recommendedName>
    <alternativeName>
        <fullName evidence="5">Protein MAIGO 5 homolog</fullName>
    </alternativeName>
</protein>
<dbReference type="EMBL" id="AB025628">
    <property type="protein sequence ID" value="BAB09075.1"/>
    <property type="molecule type" value="Genomic_DNA"/>
</dbReference>
<dbReference type="EMBL" id="CP002688">
    <property type="protein sequence ID" value="AED95525.1"/>
    <property type="molecule type" value="Genomic_DNA"/>
</dbReference>
<dbReference type="EMBL" id="CP002688">
    <property type="protein sequence ID" value="ANM68390.1"/>
    <property type="molecule type" value="Genomic_DNA"/>
</dbReference>
<dbReference type="RefSeq" id="NP_001318753.1">
    <property type="nucleotide sequence ID" value="NM_001344728.1"/>
</dbReference>
<dbReference type="RefSeq" id="NP_199560.1">
    <property type="nucleotide sequence ID" value="NM_124122.3"/>
</dbReference>
<dbReference type="FunCoup" id="Q9FGK8">
    <property type="interactions" value="154"/>
</dbReference>
<dbReference type="STRING" id="3702.Q9FGK8"/>
<dbReference type="GlyGen" id="Q9FGK8">
    <property type="glycosylation" value="3 sites"/>
</dbReference>
<dbReference type="iPTMnet" id="Q9FGK8"/>
<dbReference type="PaxDb" id="3702-AT5G47490.1"/>
<dbReference type="ProteomicsDB" id="232740"/>
<dbReference type="EnsemblPlants" id="AT5G47490.1">
    <property type="protein sequence ID" value="AT5G47490.1"/>
    <property type="gene ID" value="AT5G47490"/>
</dbReference>
<dbReference type="EnsemblPlants" id="AT5G47490.2">
    <property type="protein sequence ID" value="AT5G47490.2"/>
    <property type="gene ID" value="AT5G47490"/>
</dbReference>
<dbReference type="GeneID" id="834799"/>
<dbReference type="Gramene" id="AT5G47490.1">
    <property type="protein sequence ID" value="AT5G47490.1"/>
    <property type="gene ID" value="AT5G47490"/>
</dbReference>
<dbReference type="Gramene" id="AT5G47490.2">
    <property type="protein sequence ID" value="AT5G47490.2"/>
    <property type="gene ID" value="AT5G47490"/>
</dbReference>
<dbReference type="KEGG" id="ath:AT5G47490"/>
<dbReference type="Araport" id="AT5G47490"/>
<dbReference type="TAIR" id="AT5G47490"/>
<dbReference type="eggNOG" id="KOG1913">
    <property type="taxonomic scope" value="Eukaryota"/>
</dbReference>
<dbReference type="HOGENOM" id="CLU_002428_1_0_1"/>
<dbReference type="InParanoid" id="Q9FGK8"/>
<dbReference type="OMA" id="SENQMQA"/>
<dbReference type="PhylomeDB" id="Q9FGK8"/>
<dbReference type="PRO" id="PR:Q9FGK8"/>
<dbReference type="Proteomes" id="UP000006548">
    <property type="component" value="Chromosome 5"/>
</dbReference>
<dbReference type="ExpressionAtlas" id="Q9FGK8">
    <property type="expression patterns" value="baseline and differential"/>
</dbReference>
<dbReference type="GO" id="GO:0070971">
    <property type="term" value="C:endoplasmic reticulum exit site"/>
    <property type="evidence" value="ECO:0007669"/>
    <property type="project" value="UniProtKB-ARBA"/>
</dbReference>
<dbReference type="GO" id="GO:0005794">
    <property type="term" value="C:Golgi apparatus"/>
    <property type="evidence" value="ECO:0007669"/>
    <property type="project" value="UniProtKB-SubCell"/>
</dbReference>
<dbReference type="GO" id="GO:0046907">
    <property type="term" value="P:intracellular transport"/>
    <property type="evidence" value="ECO:0007669"/>
    <property type="project" value="UniProtKB-ARBA"/>
</dbReference>
<dbReference type="GO" id="GO:0015031">
    <property type="term" value="P:protein transport"/>
    <property type="evidence" value="ECO:0007669"/>
    <property type="project" value="UniProtKB-KW"/>
</dbReference>
<dbReference type="GO" id="GO:0016192">
    <property type="term" value="P:vesicle-mediated transport"/>
    <property type="evidence" value="ECO:0007669"/>
    <property type="project" value="UniProtKB-KW"/>
</dbReference>
<dbReference type="CDD" id="cd09233">
    <property type="entry name" value="ACE1-Sec16-like"/>
    <property type="match status" value="1"/>
</dbReference>
<dbReference type="Gene3D" id="1.25.40.1030">
    <property type="match status" value="1"/>
</dbReference>
<dbReference type="InterPro" id="IPR024340">
    <property type="entry name" value="Sec16_CCD"/>
</dbReference>
<dbReference type="InterPro" id="IPR024298">
    <property type="entry name" value="Sec16_Sec23-bd"/>
</dbReference>
<dbReference type="PANTHER" id="PTHR13402:SF27">
    <property type="entry name" value="PROTEIN TRANSPORT PROTEIN SEC16B HOMOLOG"/>
    <property type="match status" value="1"/>
</dbReference>
<dbReference type="PANTHER" id="PTHR13402">
    <property type="entry name" value="RGPR-RELATED"/>
    <property type="match status" value="1"/>
</dbReference>
<dbReference type="Pfam" id="PF12932">
    <property type="entry name" value="Sec16"/>
    <property type="match status" value="1"/>
</dbReference>
<dbReference type="Pfam" id="PF12931">
    <property type="entry name" value="TPR_Sec16"/>
    <property type="match status" value="1"/>
</dbReference>
<comment type="function">
    <text evidence="4">Required for protein transport from the endoplasmic reticulum to the Golgi apparatus.</text>
</comment>
<comment type="subcellular location">
    <subcellularLocation>
        <location evidence="1">Golgi apparatus</location>
    </subcellularLocation>
    <subcellularLocation>
        <location evidence="1">Endoplasmic reticulum</location>
    </subcellularLocation>
</comment>
<comment type="disruption phenotype">
    <text evidence="3">No visible phenotype under normal growth conditions.</text>
</comment>
<comment type="similarity">
    <text evidence="5">Belongs to the SEC16 family.</text>
</comment>
<keyword id="KW-0256">Endoplasmic reticulum</keyword>
<keyword id="KW-0931">ER-Golgi transport</keyword>
<keyword id="KW-0333">Golgi apparatus</keyword>
<keyword id="KW-0597">Phosphoprotein</keyword>
<keyword id="KW-0653">Protein transport</keyword>
<keyword id="KW-1185">Reference proteome</keyword>
<keyword id="KW-0813">Transport</keyword>
<reference key="1">
    <citation type="submission" date="1999-04" db="EMBL/GenBank/DDBJ databases">
        <title>Structural analysis of Arabidopsis thaliana chromosome 5. XI.</title>
        <authorList>
            <person name="Kaneko T."/>
            <person name="Katoh T."/>
            <person name="Asamizu E."/>
            <person name="Sato S."/>
            <person name="Nakamura Y."/>
            <person name="Kotani H."/>
            <person name="Tabata S."/>
        </authorList>
    </citation>
    <scope>NUCLEOTIDE SEQUENCE [LARGE SCALE GENOMIC DNA]</scope>
    <source>
        <strain>cv. Columbia</strain>
    </source>
</reference>
<reference key="2">
    <citation type="journal article" date="2017" name="Plant J.">
        <title>Araport11: a complete reannotation of the Arabidopsis thaliana reference genome.</title>
        <authorList>
            <person name="Cheng C.Y."/>
            <person name="Krishnakumar V."/>
            <person name="Chan A.P."/>
            <person name="Thibaud-Nissen F."/>
            <person name="Schobel S."/>
            <person name="Town C.D."/>
        </authorList>
    </citation>
    <scope>GENOME REANNOTATION</scope>
    <source>
        <strain>cv. Columbia</strain>
    </source>
</reference>
<reference key="3">
    <citation type="journal article" date="2009" name="Plant Physiol.">
        <title>Large-scale Arabidopsis phosphoproteome profiling reveals novel chloroplast kinase substrates and phosphorylation networks.</title>
        <authorList>
            <person name="Reiland S."/>
            <person name="Messerli G."/>
            <person name="Baerenfaller K."/>
            <person name="Gerrits B."/>
            <person name="Endler A."/>
            <person name="Grossmann J."/>
            <person name="Gruissem W."/>
            <person name="Baginsky S."/>
        </authorList>
    </citation>
    <scope>PHOSPHORYLATION [LARGE SCALE ANALYSIS] AT SER-46</scope>
    <scope>IDENTIFICATION BY MASS SPECTROMETRY [LARGE SCALE ANALYSIS]</scope>
</reference>
<reference key="4">
    <citation type="journal article" date="2013" name="Plant Cell">
        <title>MAIGO5 functions in protein export from Golgi-associated endoplasmic reticulum exit sites in Arabidopsis.</title>
        <authorList>
            <person name="Takagi J."/>
            <person name="Renna L."/>
            <person name="Takahashi H."/>
            <person name="Koumoto Y."/>
            <person name="Tamura K."/>
            <person name="Stefano G."/>
            <person name="Fukao Y."/>
            <person name="Kondo M."/>
            <person name="Nishimura M."/>
            <person name="Shimada T."/>
            <person name="Brandizzi F."/>
            <person name="Hara-Nishimura I."/>
        </authorList>
    </citation>
    <scope>DISRUPTION PHENOTYPE</scope>
</reference>